<reference key="1">
    <citation type="journal article" date="1994" name="Oncogene">
        <title>Molecular cloning and characterization of human ERM, a new member of the Ets family closely related to mouse PEA3 and ER81 transcription factors.</title>
        <authorList>
            <person name="Monte D."/>
            <person name="Baert J.-L."/>
            <person name="Defossez P.-A."/>
            <person name="de Launoit Y."/>
            <person name="Stehelin D."/>
        </authorList>
    </citation>
    <scope>NUCLEOTIDE SEQUENCE [MRNA] (ISOFORM 1)</scope>
    <source>
        <tissue>Testis</tissue>
    </source>
</reference>
<reference key="2">
    <citation type="journal article" date="1996" name="Genomics">
        <title>Genomic organization of the human ERM (ETV5) gene, a PEA3 group member of ETS transcription factors.</title>
        <authorList>
            <person name="Monte D."/>
            <person name="Coutte L."/>
            <person name="Dewitte F."/>
            <person name="Defossez P.-A."/>
            <person name="le Coniat D."/>
            <person name="Stehelin R."/>
            <person name="Berger Y."/>
            <person name="de Launoit Y."/>
        </authorList>
    </citation>
    <scope>NUCLEOTIDE SEQUENCE [GENOMIC DNA]</scope>
</reference>
<reference key="3">
    <citation type="journal article" date="2004" name="Nat. Genet.">
        <title>Complete sequencing and characterization of 21,243 full-length human cDNAs.</title>
        <authorList>
            <person name="Ota T."/>
            <person name="Suzuki Y."/>
            <person name="Nishikawa T."/>
            <person name="Otsuki T."/>
            <person name="Sugiyama T."/>
            <person name="Irie R."/>
            <person name="Wakamatsu A."/>
            <person name="Hayashi K."/>
            <person name="Sato H."/>
            <person name="Nagai K."/>
            <person name="Kimura K."/>
            <person name="Makita H."/>
            <person name="Sekine M."/>
            <person name="Obayashi M."/>
            <person name="Nishi T."/>
            <person name="Shibahara T."/>
            <person name="Tanaka T."/>
            <person name="Ishii S."/>
            <person name="Yamamoto J."/>
            <person name="Saito K."/>
            <person name="Kawai Y."/>
            <person name="Isono Y."/>
            <person name="Nakamura Y."/>
            <person name="Nagahari K."/>
            <person name="Murakami K."/>
            <person name="Yasuda T."/>
            <person name="Iwayanagi T."/>
            <person name="Wagatsuma M."/>
            <person name="Shiratori A."/>
            <person name="Sudo H."/>
            <person name="Hosoiri T."/>
            <person name="Kaku Y."/>
            <person name="Kodaira H."/>
            <person name="Kondo H."/>
            <person name="Sugawara M."/>
            <person name="Takahashi M."/>
            <person name="Kanda K."/>
            <person name="Yokoi T."/>
            <person name="Furuya T."/>
            <person name="Kikkawa E."/>
            <person name="Omura Y."/>
            <person name="Abe K."/>
            <person name="Kamihara K."/>
            <person name="Katsuta N."/>
            <person name="Sato K."/>
            <person name="Tanikawa M."/>
            <person name="Yamazaki M."/>
            <person name="Ninomiya K."/>
            <person name="Ishibashi T."/>
            <person name="Yamashita H."/>
            <person name="Murakawa K."/>
            <person name="Fujimori K."/>
            <person name="Tanai H."/>
            <person name="Kimata M."/>
            <person name="Watanabe M."/>
            <person name="Hiraoka S."/>
            <person name="Chiba Y."/>
            <person name="Ishida S."/>
            <person name="Ono Y."/>
            <person name="Takiguchi S."/>
            <person name="Watanabe S."/>
            <person name="Yosida M."/>
            <person name="Hotuta T."/>
            <person name="Kusano J."/>
            <person name="Kanehori K."/>
            <person name="Takahashi-Fujii A."/>
            <person name="Hara H."/>
            <person name="Tanase T.-O."/>
            <person name="Nomura Y."/>
            <person name="Togiya S."/>
            <person name="Komai F."/>
            <person name="Hara R."/>
            <person name="Takeuchi K."/>
            <person name="Arita M."/>
            <person name="Imose N."/>
            <person name="Musashino K."/>
            <person name="Yuuki H."/>
            <person name="Oshima A."/>
            <person name="Sasaki N."/>
            <person name="Aotsuka S."/>
            <person name="Yoshikawa Y."/>
            <person name="Matsunawa H."/>
            <person name="Ichihara T."/>
            <person name="Shiohata N."/>
            <person name="Sano S."/>
            <person name="Moriya S."/>
            <person name="Momiyama H."/>
            <person name="Satoh N."/>
            <person name="Takami S."/>
            <person name="Terashima Y."/>
            <person name="Suzuki O."/>
            <person name="Nakagawa S."/>
            <person name="Senoh A."/>
            <person name="Mizoguchi H."/>
            <person name="Goto Y."/>
            <person name="Shimizu F."/>
            <person name="Wakebe H."/>
            <person name="Hishigaki H."/>
            <person name="Watanabe T."/>
            <person name="Sugiyama A."/>
            <person name="Takemoto M."/>
            <person name="Kawakami B."/>
            <person name="Yamazaki M."/>
            <person name="Watanabe K."/>
            <person name="Kumagai A."/>
            <person name="Itakura S."/>
            <person name="Fukuzumi Y."/>
            <person name="Fujimori Y."/>
            <person name="Komiyama M."/>
            <person name="Tashiro H."/>
            <person name="Tanigami A."/>
            <person name="Fujiwara T."/>
            <person name="Ono T."/>
            <person name="Yamada K."/>
            <person name="Fujii Y."/>
            <person name="Ozaki K."/>
            <person name="Hirao M."/>
            <person name="Ohmori Y."/>
            <person name="Kawabata A."/>
            <person name="Hikiji T."/>
            <person name="Kobatake N."/>
            <person name="Inagaki H."/>
            <person name="Ikema Y."/>
            <person name="Okamoto S."/>
            <person name="Okitani R."/>
            <person name="Kawakami T."/>
            <person name="Noguchi S."/>
            <person name="Itoh T."/>
            <person name="Shigeta K."/>
            <person name="Senba T."/>
            <person name="Matsumura K."/>
            <person name="Nakajima Y."/>
            <person name="Mizuno T."/>
            <person name="Morinaga M."/>
            <person name="Sasaki M."/>
            <person name="Togashi T."/>
            <person name="Oyama M."/>
            <person name="Hata H."/>
            <person name="Watanabe M."/>
            <person name="Komatsu T."/>
            <person name="Mizushima-Sugano J."/>
            <person name="Satoh T."/>
            <person name="Shirai Y."/>
            <person name="Takahashi Y."/>
            <person name="Nakagawa K."/>
            <person name="Okumura K."/>
            <person name="Nagase T."/>
            <person name="Nomura N."/>
            <person name="Kikuchi H."/>
            <person name="Masuho Y."/>
            <person name="Yamashita R."/>
            <person name="Nakai K."/>
            <person name="Yada T."/>
            <person name="Nakamura Y."/>
            <person name="Ohara O."/>
            <person name="Isogai T."/>
            <person name="Sugano S."/>
        </authorList>
    </citation>
    <scope>NUCLEOTIDE SEQUENCE [LARGE SCALE MRNA] (ISOFORM 2)</scope>
    <source>
        <tissue>Testis</tissue>
    </source>
</reference>
<reference key="4">
    <citation type="submission" date="2004-06" db="EMBL/GenBank/DDBJ databases">
        <title>Cloning of human full open reading frames in Gateway(TM) system entry vector (pDONR201).</title>
        <authorList>
            <person name="Ebert L."/>
            <person name="Schick M."/>
            <person name="Neubert P."/>
            <person name="Schatten R."/>
            <person name="Henze S."/>
            <person name="Korn B."/>
        </authorList>
    </citation>
    <scope>NUCLEOTIDE SEQUENCE [LARGE SCALE MRNA] (ISOFORM 1)</scope>
</reference>
<reference key="5">
    <citation type="submission" date="2004-10" db="EMBL/GenBank/DDBJ databases">
        <title>Cloning of human full-length CDSs in BD Creator(TM) system donor vector.</title>
        <authorList>
            <person name="Kalnine N."/>
            <person name="Chen X."/>
            <person name="Rolfs A."/>
            <person name="Halleck A."/>
            <person name="Hines L."/>
            <person name="Eisenstein S."/>
            <person name="Koundinya M."/>
            <person name="Raphael J."/>
            <person name="Moreira D."/>
            <person name="Kelley T."/>
            <person name="LaBaer J."/>
            <person name="Lin Y."/>
            <person name="Phelan M."/>
            <person name="Farmer A."/>
        </authorList>
    </citation>
    <scope>NUCLEOTIDE SEQUENCE [LARGE SCALE MRNA] (ISOFORM 1)</scope>
</reference>
<reference key="6">
    <citation type="journal article" date="2006" name="Nature">
        <title>The DNA sequence, annotation and analysis of human chromosome 3.</title>
        <authorList>
            <person name="Muzny D.M."/>
            <person name="Scherer S.E."/>
            <person name="Kaul R."/>
            <person name="Wang J."/>
            <person name="Yu J."/>
            <person name="Sudbrak R."/>
            <person name="Buhay C.J."/>
            <person name="Chen R."/>
            <person name="Cree A."/>
            <person name="Ding Y."/>
            <person name="Dugan-Rocha S."/>
            <person name="Gill R."/>
            <person name="Gunaratne P."/>
            <person name="Harris R.A."/>
            <person name="Hawes A.C."/>
            <person name="Hernandez J."/>
            <person name="Hodgson A.V."/>
            <person name="Hume J."/>
            <person name="Jackson A."/>
            <person name="Khan Z.M."/>
            <person name="Kovar-Smith C."/>
            <person name="Lewis L.R."/>
            <person name="Lozado R.J."/>
            <person name="Metzker M.L."/>
            <person name="Milosavljevic A."/>
            <person name="Miner G.R."/>
            <person name="Morgan M.B."/>
            <person name="Nazareth L.V."/>
            <person name="Scott G."/>
            <person name="Sodergren E."/>
            <person name="Song X.-Z."/>
            <person name="Steffen D."/>
            <person name="Wei S."/>
            <person name="Wheeler D.A."/>
            <person name="Wright M.W."/>
            <person name="Worley K.C."/>
            <person name="Yuan Y."/>
            <person name="Zhang Z."/>
            <person name="Adams C.Q."/>
            <person name="Ansari-Lari M.A."/>
            <person name="Ayele M."/>
            <person name="Brown M.J."/>
            <person name="Chen G."/>
            <person name="Chen Z."/>
            <person name="Clendenning J."/>
            <person name="Clerc-Blankenburg K.P."/>
            <person name="Chen R."/>
            <person name="Chen Z."/>
            <person name="Davis C."/>
            <person name="Delgado O."/>
            <person name="Dinh H.H."/>
            <person name="Dong W."/>
            <person name="Draper H."/>
            <person name="Ernst S."/>
            <person name="Fu G."/>
            <person name="Gonzalez-Garay M.L."/>
            <person name="Garcia D.K."/>
            <person name="Gillett W."/>
            <person name="Gu J."/>
            <person name="Hao B."/>
            <person name="Haugen E."/>
            <person name="Havlak P."/>
            <person name="He X."/>
            <person name="Hennig S."/>
            <person name="Hu S."/>
            <person name="Huang W."/>
            <person name="Jackson L.R."/>
            <person name="Jacob L.S."/>
            <person name="Kelly S.H."/>
            <person name="Kube M."/>
            <person name="Levy R."/>
            <person name="Li Z."/>
            <person name="Liu B."/>
            <person name="Liu J."/>
            <person name="Liu W."/>
            <person name="Lu J."/>
            <person name="Maheshwari M."/>
            <person name="Nguyen B.-V."/>
            <person name="Okwuonu G.O."/>
            <person name="Palmeiri A."/>
            <person name="Pasternak S."/>
            <person name="Perez L.M."/>
            <person name="Phelps K.A."/>
            <person name="Plopper F.J."/>
            <person name="Qiang B."/>
            <person name="Raymond C."/>
            <person name="Rodriguez R."/>
            <person name="Saenphimmachak C."/>
            <person name="Santibanez J."/>
            <person name="Shen H."/>
            <person name="Shen Y."/>
            <person name="Subramanian S."/>
            <person name="Tabor P.E."/>
            <person name="Verduzco D."/>
            <person name="Waldron L."/>
            <person name="Wang J."/>
            <person name="Wang J."/>
            <person name="Wang Q."/>
            <person name="Williams G.A."/>
            <person name="Wong G.K.-S."/>
            <person name="Yao Z."/>
            <person name="Zhang J."/>
            <person name="Zhang X."/>
            <person name="Zhao G."/>
            <person name="Zhou J."/>
            <person name="Zhou Y."/>
            <person name="Nelson D."/>
            <person name="Lehrach H."/>
            <person name="Reinhardt R."/>
            <person name="Naylor S.L."/>
            <person name="Yang H."/>
            <person name="Olson M."/>
            <person name="Weinstock G."/>
            <person name="Gibbs R.A."/>
        </authorList>
    </citation>
    <scope>NUCLEOTIDE SEQUENCE [LARGE SCALE GENOMIC DNA]</scope>
</reference>
<reference key="7">
    <citation type="submission" date="2005-09" db="EMBL/GenBank/DDBJ databases">
        <authorList>
            <person name="Mural R.J."/>
            <person name="Istrail S."/>
            <person name="Sutton G.G."/>
            <person name="Florea L."/>
            <person name="Halpern A.L."/>
            <person name="Mobarry C.M."/>
            <person name="Lippert R."/>
            <person name="Walenz B."/>
            <person name="Shatkay H."/>
            <person name="Dew I."/>
            <person name="Miller J.R."/>
            <person name="Flanigan M.J."/>
            <person name="Edwards N.J."/>
            <person name="Bolanos R."/>
            <person name="Fasulo D."/>
            <person name="Halldorsson B.V."/>
            <person name="Hannenhalli S."/>
            <person name="Turner R."/>
            <person name="Yooseph S."/>
            <person name="Lu F."/>
            <person name="Nusskern D.R."/>
            <person name="Shue B.C."/>
            <person name="Zheng X.H."/>
            <person name="Zhong F."/>
            <person name="Delcher A.L."/>
            <person name="Huson D.H."/>
            <person name="Kravitz S.A."/>
            <person name="Mouchard L."/>
            <person name="Reinert K."/>
            <person name="Remington K.A."/>
            <person name="Clark A.G."/>
            <person name="Waterman M.S."/>
            <person name="Eichler E.E."/>
            <person name="Adams M.D."/>
            <person name="Hunkapiller M.W."/>
            <person name="Myers E.W."/>
            <person name="Venter J.C."/>
        </authorList>
    </citation>
    <scope>NUCLEOTIDE SEQUENCE [LARGE SCALE GENOMIC DNA]</scope>
</reference>
<reference key="8">
    <citation type="journal article" date="2004" name="Genome Res.">
        <title>The status, quality, and expansion of the NIH full-length cDNA project: the Mammalian Gene Collection (MGC).</title>
        <authorList>
            <consortium name="The MGC Project Team"/>
        </authorList>
    </citation>
    <scope>NUCLEOTIDE SEQUENCE [LARGE SCALE MRNA] (ISOFORM 1)</scope>
    <source>
        <tissue>Skin</tissue>
    </source>
</reference>
<reference key="9">
    <citation type="journal article" date="2002" name="Proteomics">
        <title>Cluster analysis of an extensive human breast cancer cell line protein expression map database.</title>
        <authorList>
            <person name="Harris R.A."/>
            <person name="Yang A."/>
            <person name="Stein R.C."/>
            <person name="Lucy K."/>
            <person name="Brusten L."/>
            <person name="Herath A."/>
            <person name="Parekh R."/>
            <person name="Waterfield M.D."/>
            <person name="O'Hare M.J."/>
            <person name="Neville M.A."/>
            <person name="Page M.J."/>
            <person name="Zvelebil M.J."/>
        </authorList>
    </citation>
    <scope>MASS SPECTROMETRY</scope>
    <source>
        <tissue>Mammary cancer</tissue>
    </source>
</reference>
<reference key="10">
    <citation type="journal article" date="2007" name="Brain Res.">
        <title>Analysis of transcriptional modulation of the presenilin 1 gene promoter by ZNF237, a candidate binding partner of the Ets transcription factor ERM.</title>
        <authorList>
            <person name="Pastorcic M."/>
            <person name="Das H.K."/>
        </authorList>
    </citation>
    <scope>INTERACTION WITH ZMYM5</scope>
</reference>
<reference key="11">
    <citation type="journal article" date="2013" name="J. Proteome Res.">
        <title>Toward a comprehensive characterization of a human cancer cell phosphoproteome.</title>
        <authorList>
            <person name="Zhou H."/>
            <person name="Di Palma S."/>
            <person name="Preisinger C."/>
            <person name="Peng M."/>
            <person name="Polat A.N."/>
            <person name="Heck A.J."/>
            <person name="Mohammed S."/>
        </authorList>
    </citation>
    <scope>PHOSPHORYLATION [LARGE SCALE ANALYSIS] AT SER-248</scope>
    <scope>IDENTIFICATION BY MASS SPECTROMETRY [LARGE SCALE ANALYSIS]</scope>
    <source>
        <tissue>Erythroleukemia</tissue>
    </source>
</reference>
<reference key="12">
    <citation type="journal article" date="2015" name="Mol. Cell. Proteomics">
        <title>System-wide analysis of SUMOylation dynamics in response to replication stress reveals novel small ubiquitin-like modified target proteins and acceptor lysines relevant for genome stability.</title>
        <authorList>
            <person name="Xiao Z."/>
            <person name="Chang J.G."/>
            <person name="Hendriks I.A."/>
            <person name="Sigurdsson J.O."/>
            <person name="Olsen J.V."/>
            <person name="Vertegaal A.C."/>
        </authorList>
    </citation>
    <scope>SUMOYLATION [LARGE SCALE ANALYSIS] AT LYS-350</scope>
    <scope>IDENTIFICATION BY MASS SPECTROMETRY [LARGE SCALE ANALYSIS]</scope>
</reference>
<reference key="13">
    <citation type="journal article" date="2017" name="Nat. Struct. Mol. Biol.">
        <title>Site-specific mapping of the human SUMO proteome reveals co-modification with phosphorylation.</title>
        <authorList>
            <person name="Hendriks I.A."/>
            <person name="Lyon D."/>
            <person name="Young C."/>
            <person name="Jensen L.J."/>
            <person name="Vertegaal A.C."/>
            <person name="Nielsen M.L."/>
        </authorList>
    </citation>
    <scope>SUMOYLATION [LARGE SCALE ANALYSIS] AT LYS-350</scope>
    <scope>IDENTIFICATION BY MASS SPECTROMETRY [LARGE SCALE ANALYSIS]</scope>
</reference>
<organism>
    <name type="scientific">Homo sapiens</name>
    <name type="common">Human</name>
    <dbReference type="NCBI Taxonomy" id="9606"/>
    <lineage>
        <taxon>Eukaryota</taxon>
        <taxon>Metazoa</taxon>
        <taxon>Chordata</taxon>
        <taxon>Craniata</taxon>
        <taxon>Vertebrata</taxon>
        <taxon>Euteleostomi</taxon>
        <taxon>Mammalia</taxon>
        <taxon>Eutheria</taxon>
        <taxon>Euarchontoglires</taxon>
        <taxon>Primates</taxon>
        <taxon>Haplorrhini</taxon>
        <taxon>Catarrhini</taxon>
        <taxon>Hominidae</taxon>
        <taxon>Homo</taxon>
    </lineage>
</organism>
<feature type="chain" id="PRO_0000204118" description="ETS translocation variant 5">
    <location>
        <begin position="1"/>
        <end position="510"/>
    </location>
</feature>
<feature type="DNA-binding region" description="ETS" evidence="1">
    <location>
        <begin position="368"/>
        <end position="448"/>
    </location>
</feature>
<feature type="region of interest" description="Disordered" evidence="2">
    <location>
        <begin position="131"/>
        <end position="208"/>
    </location>
</feature>
<feature type="compositionally biased region" description="Low complexity" evidence="2">
    <location>
        <begin position="161"/>
        <end position="174"/>
    </location>
</feature>
<feature type="compositionally biased region" description="Pro residues" evidence="2">
    <location>
        <begin position="175"/>
        <end position="185"/>
    </location>
</feature>
<feature type="modified residue" description="Phosphoserine" evidence="8">
    <location>
        <position position="248"/>
    </location>
</feature>
<feature type="cross-link" description="Glycyl lysine isopeptide (Lys-Gly) (interchain with G-Cter in SUMO2)" evidence="9 10">
    <location>
        <position position="350"/>
    </location>
</feature>
<feature type="splice variant" id="VSP_055489" description="In isoform 2." evidence="6">
    <original>M</original>
    <variation>MSERRCPPEHREGVNDTGGSLFPQKLLNAETSQSGIRDAESTM</variation>
    <location>
        <position position="1"/>
    </location>
</feature>
<feature type="sequence variant" id="VAR_048951" description="In dbSNP:rs2228269.">
    <original>K</original>
    <variation>R</variation>
    <location>
        <position position="348"/>
    </location>
</feature>
<feature type="helix" evidence="11">
    <location>
        <begin position="370"/>
        <end position="378"/>
    </location>
</feature>
<feature type="helix" evidence="11">
    <location>
        <begin position="381"/>
        <end position="383"/>
    </location>
</feature>
<feature type="turn" evidence="11">
    <location>
        <begin position="384"/>
        <end position="386"/>
    </location>
</feature>
<feature type="strand" evidence="11">
    <location>
        <begin position="387"/>
        <end position="389"/>
    </location>
</feature>
<feature type="strand" evidence="11">
    <location>
        <begin position="395"/>
        <end position="400"/>
    </location>
</feature>
<feature type="helix" evidence="11">
    <location>
        <begin position="401"/>
        <end position="412"/>
    </location>
</feature>
<feature type="helix" evidence="11">
    <location>
        <begin position="419"/>
        <end position="431"/>
    </location>
</feature>
<feature type="strand" evidence="11">
    <location>
        <begin position="434"/>
        <end position="437"/>
    </location>
</feature>
<feature type="strand" evidence="11">
    <location>
        <begin position="442"/>
        <end position="449"/>
    </location>
</feature>
<feature type="helix" evidence="11">
    <location>
        <begin position="453"/>
        <end position="455"/>
    </location>
</feature>
<sequence length="510" mass="57838">MDGFYDQQVPFMVPGKSRSEECRGRPVIDRKRKFLDTDLAHDSEELFQDLSQLQEAWLAEAQVPDDEQFVPDFQSDNLVLHAPPPTKIKRELHSPSSELSSCSHEQALGANYGEKCLYNYCAYDRKPPSGFKPLTPPTTPLSPTHQNPLFPPPQATLPTSGHAPAAGPVQGVGPAPAPHSLPEPGPQQQTFAVPRPPHQPLQMPKMMPENQYPSEQRFQRQLSEPCHPFPPQPGVPGDNRPSYHRQMSEPIVPAAPPPPQGFKQEYHDPLYEHGVPGMPGPPAHGFQSPMGIKQEPRDYCVDSEVPNCQSSYMRGGYFSSSHEGFSYEKDPRLYFDDTCVVPERLEGKVKQEPTMYREGPPYQRRGSLQLWQFLVTLLDDPANAHFIAWTGRGMEFKLIEPEEVARRWGIQKNRPAMNYDKLSRSLRYYYEKGIMQKVAGERYVYKFVCDPDALFSMAFPDNQRPFLKAESECHLSEEDTLPLTHFEDSPAYLLDMDRCSSLPYAEGFAY</sequence>
<dbReference type="EMBL" id="X76184">
    <property type="protein sequence ID" value="CAA53778.1"/>
    <property type="molecule type" value="mRNA"/>
</dbReference>
<dbReference type="EMBL" id="X96381">
    <property type="protein sequence ID" value="CAA65246.1"/>
    <property type="molecule type" value="Genomic_DNA"/>
</dbReference>
<dbReference type="EMBL" id="X96380">
    <property type="protein sequence ID" value="CAA65246.1"/>
    <property type="status" value="JOINED"/>
    <property type="molecule type" value="Genomic_DNA"/>
</dbReference>
<dbReference type="EMBL" id="X96382">
    <property type="protein sequence ID" value="CAA65246.1"/>
    <property type="status" value="JOINED"/>
    <property type="molecule type" value="Genomic_DNA"/>
</dbReference>
<dbReference type="EMBL" id="X96379">
    <property type="protein sequence ID" value="CAA65246.1"/>
    <property type="status" value="JOINED"/>
    <property type="molecule type" value="Genomic_DNA"/>
</dbReference>
<dbReference type="EMBL" id="X96378">
    <property type="protein sequence ID" value="CAA65246.1"/>
    <property type="status" value="JOINED"/>
    <property type="molecule type" value="Genomic_DNA"/>
</dbReference>
<dbReference type="EMBL" id="X96377">
    <property type="protein sequence ID" value="CAA65246.1"/>
    <property type="status" value="JOINED"/>
    <property type="molecule type" value="Genomic_DNA"/>
</dbReference>
<dbReference type="EMBL" id="X96376">
    <property type="protein sequence ID" value="CAA65246.1"/>
    <property type="status" value="JOINED"/>
    <property type="molecule type" value="Genomic_DNA"/>
</dbReference>
<dbReference type="EMBL" id="X96375">
    <property type="protein sequence ID" value="CAA65246.1"/>
    <property type="status" value="JOINED"/>
    <property type="molecule type" value="Genomic_DNA"/>
</dbReference>
<dbReference type="EMBL" id="AK301878">
    <property type="protein sequence ID" value="BAH13573.1"/>
    <property type="molecule type" value="mRNA"/>
</dbReference>
<dbReference type="EMBL" id="CR456767">
    <property type="protein sequence ID" value="CAG33048.1"/>
    <property type="molecule type" value="mRNA"/>
</dbReference>
<dbReference type="EMBL" id="BT006713">
    <property type="protein sequence ID" value="AAP35359.1"/>
    <property type="molecule type" value="mRNA"/>
</dbReference>
<dbReference type="EMBL" id="AC108671">
    <property type="status" value="NOT_ANNOTATED_CDS"/>
    <property type="molecule type" value="Genomic_DNA"/>
</dbReference>
<dbReference type="EMBL" id="AC112649">
    <property type="status" value="NOT_ANNOTATED_CDS"/>
    <property type="molecule type" value="Genomic_DNA"/>
</dbReference>
<dbReference type="EMBL" id="AC131156">
    <property type="status" value="NOT_ANNOTATED_CDS"/>
    <property type="molecule type" value="Genomic_DNA"/>
</dbReference>
<dbReference type="EMBL" id="CH471052">
    <property type="protein sequence ID" value="EAW78200.1"/>
    <property type="molecule type" value="Genomic_DNA"/>
</dbReference>
<dbReference type="EMBL" id="BC007333">
    <property type="protein sequence ID" value="AAH07333.1"/>
    <property type="molecule type" value="mRNA"/>
</dbReference>
<dbReference type="CCDS" id="CCDS33906.1">
    <molecule id="P41161-1"/>
</dbReference>
<dbReference type="PIR" id="S43692">
    <property type="entry name" value="S43692"/>
</dbReference>
<dbReference type="RefSeq" id="NP_004445.1">
    <molecule id="P41161-1"/>
    <property type="nucleotide sequence ID" value="NM_004454.3"/>
</dbReference>
<dbReference type="PDB" id="4UNO">
    <property type="method" value="X-ray"/>
    <property type="resolution" value="1.95 A"/>
    <property type="chains" value="A=365-462"/>
</dbReference>
<dbReference type="PDB" id="5ILV">
    <property type="method" value="X-ray"/>
    <property type="resolution" value="1.80 A"/>
    <property type="chains" value="A=366-457"/>
</dbReference>
<dbReference type="PDBsum" id="4UNO"/>
<dbReference type="PDBsum" id="5ILV"/>
<dbReference type="SMR" id="P41161"/>
<dbReference type="BioGRID" id="108420">
    <property type="interactions" value="36"/>
</dbReference>
<dbReference type="FunCoup" id="P41161">
    <property type="interactions" value="2182"/>
</dbReference>
<dbReference type="IntAct" id="P41161">
    <property type="interactions" value="22"/>
</dbReference>
<dbReference type="STRING" id="9606.ENSP00000306894"/>
<dbReference type="GlyGen" id="P41161">
    <property type="glycosylation" value="1 site, 1 O-linked glycan (1 site)"/>
</dbReference>
<dbReference type="iPTMnet" id="P41161"/>
<dbReference type="PhosphoSitePlus" id="P41161"/>
<dbReference type="BioMuta" id="ETV5"/>
<dbReference type="DMDM" id="729441"/>
<dbReference type="jPOST" id="P41161"/>
<dbReference type="MassIVE" id="P41161"/>
<dbReference type="PaxDb" id="9606-ENSP00000306894"/>
<dbReference type="PeptideAtlas" id="P41161"/>
<dbReference type="ProteomicsDB" id="55407">
    <molecule id="P41161-1"/>
</dbReference>
<dbReference type="ProteomicsDB" id="6857"/>
<dbReference type="Antibodypedia" id="34851">
    <property type="antibodies" value="356 antibodies from 34 providers"/>
</dbReference>
<dbReference type="DNASU" id="2119"/>
<dbReference type="Ensembl" id="ENST00000306376.10">
    <molecule id="P41161-1"/>
    <property type="protein sequence ID" value="ENSP00000306894.5"/>
    <property type="gene ID" value="ENSG00000244405.8"/>
</dbReference>
<dbReference type="Ensembl" id="ENST00000434744.5">
    <molecule id="P41161-1"/>
    <property type="protein sequence ID" value="ENSP00000413755.1"/>
    <property type="gene ID" value="ENSG00000244405.8"/>
</dbReference>
<dbReference type="GeneID" id="2119"/>
<dbReference type="KEGG" id="hsa:2119"/>
<dbReference type="MANE-Select" id="ENST00000306376.10">
    <property type="protein sequence ID" value="ENSP00000306894.5"/>
    <property type="RefSeq nucleotide sequence ID" value="NM_004454.3"/>
    <property type="RefSeq protein sequence ID" value="NP_004445.1"/>
</dbReference>
<dbReference type="UCSC" id="uc003fpz.4">
    <molecule id="P41161-1"/>
    <property type="organism name" value="human"/>
</dbReference>
<dbReference type="AGR" id="HGNC:3494"/>
<dbReference type="CTD" id="2119"/>
<dbReference type="DisGeNET" id="2119"/>
<dbReference type="GeneCards" id="ETV5"/>
<dbReference type="HGNC" id="HGNC:3494">
    <property type="gene designation" value="ETV5"/>
</dbReference>
<dbReference type="HPA" id="ENSG00000244405">
    <property type="expression patterns" value="Low tissue specificity"/>
</dbReference>
<dbReference type="MalaCards" id="ETV5"/>
<dbReference type="MIM" id="601600">
    <property type="type" value="gene"/>
</dbReference>
<dbReference type="neXtProt" id="NX_P41161"/>
<dbReference type="OpenTargets" id="ENSG00000244405"/>
<dbReference type="PharmGKB" id="PA27908"/>
<dbReference type="VEuPathDB" id="HostDB:ENSG00000244405"/>
<dbReference type="eggNOG" id="KOG3806">
    <property type="taxonomic scope" value="Eukaryota"/>
</dbReference>
<dbReference type="GeneTree" id="ENSGT00940000160680"/>
<dbReference type="HOGENOM" id="CLU_030025_1_0_1"/>
<dbReference type="InParanoid" id="P41161"/>
<dbReference type="OMA" id="MIPENQY"/>
<dbReference type="OrthoDB" id="10067219at2759"/>
<dbReference type="PAN-GO" id="P41161">
    <property type="GO annotations" value="4 GO annotations based on evolutionary models"/>
</dbReference>
<dbReference type="PhylomeDB" id="P41161"/>
<dbReference type="TreeFam" id="TF316214"/>
<dbReference type="PathwayCommons" id="P41161"/>
<dbReference type="SignaLink" id="P41161"/>
<dbReference type="SIGNOR" id="P41161"/>
<dbReference type="BioGRID-ORCS" id="2119">
    <property type="hits" value="22 hits in 1190 CRISPR screens"/>
</dbReference>
<dbReference type="ChiTaRS" id="ETV5">
    <property type="organism name" value="human"/>
</dbReference>
<dbReference type="EvolutionaryTrace" id="P41161"/>
<dbReference type="GenomeRNAi" id="2119"/>
<dbReference type="Pharos" id="P41161">
    <property type="development level" value="Tbio"/>
</dbReference>
<dbReference type="PRO" id="PR:P41161"/>
<dbReference type="Proteomes" id="UP000005640">
    <property type="component" value="Chromosome 3"/>
</dbReference>
<dbReference type="RNAct" id="P41161">
    <property type="molecule type" value="protein"/>
</dbReference>
<dbReference type="Bgee" id="ENSG00000244405">
    <property type="expression patterns" value="Expressed in buccal mucosa cell and 177 other cell types or tissues"/>
</dbReference>
<dbReference type="ExpressionAtlas" id="P41161">
    <property type="expression patterns" value="baseline and differential"/>
</dbReference>
<dbReference type="GO" id="GO:0000785">
    <property type="term" value="C:chromatin"/>
    <property type="evidence" value="ECO:0000247"/>
    <property type="project" value="NTNU_SB"/>
</dbReference>
<dbReference type="GO" id="GO:0005654">
    <property type="term" value="C:nucleoplasm"/>
    <property type="evidence" value="ECO:0000314"/>
    <property type="project" value="HPA"/>
</dbReference>
<dbReference type="GO" id="GO:0005634">
    <property type="term" value="C:nucleus"/>
    <property type="evidence" value="ECO:0000314"/>
    <property type="project" value="UniProtKB"/>
</dbReference>
<dbReference type="GO" id="GO:0005886">
    <property type="term" value="C:plasma membrane"/>
    <property type="evidence" value="ECO:0007669"/>
    <property type="project" value="GOC"/>
</dbReference>
<dbReference type="GO" id="GO:0045202">
    <property type="term" value="C:synapse"/>
    <property type="evidence" value="ECO:0007669"/>
    <property type="project" value="GOC"/>
</dbReference>
<dbReference type="GO" id="GO:0003677">
    <property type="term" value="F:DNA binding"/>
    <property type="evidence" value="ECO:0000304"/>
    <property type="project" value="ProtInc"/>
</dbReference>
<dbReference type="GO" id="GO:0001228">
    <property type="term" value="F:DNA-binding transcription activator activity, RNA polymerase II-specific"/>
    <property type="evidence" value="ECO:0000315"/>
    <property type="project" value="NTNU_SB"/>
</dbReference>
<dbReference type="GO" id="GO:0003700">
    <property type="term" value="F:DNA-binding transcription factor activity"/>
    <property type="evidence" value="ECO:0000314"/>
    <property type="project" value="UniProtKB"/>
</dbReference>
<dbReference type="GO" id="GO:0000981">
    <property type="term" value="F:DNA-binding transcription factor activity, RNA polymerase II-specific"/>
    <property type="evidence" value="ECO:0000247"/>
    <property type="project" value="NTNU_SB"/>
</dbReference>
<dbReference type="GO" id="GO:0000977">
    <property type="term" value="F:RNA polymerase II transcription regulatory region sequence-specific DNA binding"/>
    <property type="evidence" value="ECO:0000315"/>
    <property type="project" value="NTNU_SB"/>
</dbReference>
<dbReference type="GO" id="GO:1990837">
    <property type="term" value="F:sequence-specific double-stranded DNA binding"/>
    <property type="evidence" value="ECO:0000314"/>
    <property type="project" value="ARUK-UCL"/>
</dbReference>
<dbReference type="GO" id="GO:0000976">
    <property type="term" value="F:transcription cis-regulatory region binding"/>
    <property type="evidence" value="ECO:0000314"/>
    <property type="project" value="UniProtKB"/>
</dbReference>
<dbReference type="GO" id="GO:0030154">
    <property type="term" value="P:cell differentiation"/>
    <property type="evidence" value="ECO:0000318"/>
    <property type="project" value="GO_Central"/>
</dbReference>
<dbReference type="GO" id="GO:0034599">
    <property type="term" value="P:cellular response to oxidative stress"/>
    <property type="evidence" value="ECO:0000314"/>
    <property type="project" value="UniProtKB"/>
</dbReference>
<dbReference type="GO" id="GO:0007626">
    <property type="term" value="P:locomotory behavior"/>
    <property type="evidence" value="ECO:0007669"/>
    <property type="project" value="Ensembl"/>
</dbReference>
<dbReference type="GO" id="GO:0048133">
    <property type="term" value="P:male germ-line stem cell asymmetric division"/>
    <property type="evidence" value="ECO:0007669"/>
    <property type="project" value="Ensembl"/>
</dbReference>
<dbReference type="GO" id="GO:0000122">
    <property type="term" value="P:negative regulation of transcription by RNA polymerase II"/>
    <property type="evidence" value="ECO:0000314"/>
    <property type="project" value="GO_Central"/>
</dbReference>
<dbReference type="GO" id="GO:0007274">
    <property type="term" value="P:neuromuscular synaptic transmission"/>
    <property type="evidence" value="ECO:0007669"/>
    <property type="project" value="Ensembl"/>
</dbReference>
<dbReference type="GO" id="GO:0060252">
    <property type="term" value="P:positive regulation of glial cell proliferation"/>
    <property type="evidence" value="ECO:0007669"/>
    <property type="project" value="Ensembl"/>
</dbReference>
<dbReference type="GO" id="GO:0045666">
    <property type="term" value="P:positive regulation of neuron differentiation"/>
    <property type="evidence" value="ECO:0007669"/>
    <property type="project" value="Ensembl"/>
</dbReference>
<dbReference type="GO" id="GO:0045944">
    <property type="term" value="P:positive regulation of transcription by RNA polymerase II"/>
    <property type="evidence" value="ECO:0000315"/>
    <property type="project" value="NTNU_SB"/>
</dbReference>
<dbReference type="GO" id="GO:0060762">
    <property type="term" value="P:regulation of branching involved in mammary gland duct morphogenesis"/>
    <property type="evidence" value="ECO:0007669"/>
    <property type="project" value="Ensembl"/>
</dbReference>
<dbReference type="GO" id="GO:0050807">
    <property type="term" value="P:regulation of synapse organization"/>
    <property type="evidence" value="ECO:0007669"/>
    <property type="project" value="Ensembl"/>
</dbReference>
<dbReference type="GO" id="GO:0006357">
    <property type="term" value="P:regulation of transcription by RNA polymerase II"/>
    <property type="evidence" value="ECO:0000318"/>
    <property type="project" value="GO_Central"/>
</dbReference>
<dbReference type="GO" id="GO:0071340">
    <property type="term" value="P:skeletal muscle acetylcholine-gated channel clustering"/>
    <property type="evidence" value="ECO:0007669"/>
    <property type="project" value="Ensembl"/>
</dbReference>
<dbReference type="FunFam" id="1.10.10.10:FF:000121">
    <property type="entry name" value="ETS translocation variant 5"/>
    <property type="match status" value="1"/>
</dbReference>
<dbReference type="Gene3D" id="1.10.10.10">
    <property type="entry name" value="Winged helix-like DNA-binding domain superfamily/Winged helix DNA-binding domain"/>
    <property type="match status" value="1"/>
</dbReference>
<dbReference type="InterPro" id="IPR000418">
    <property type="entry name" value="Ets_dom"/>
</dbReference>
<dbReference type="InterPro" id="IPR046328">
    <property type="entry name" value="ETS_fam"/>
</dbReference>
<dbReference type="InterPro" id="IPR006715">
    <property type="entry name" value="ETS_PEA3_N"/>
</dbReference>
<dbReference type="InterPro" id="IPR036388">
    <property type="entry name" value="WH-like_DNA-bd_sf"/>
</dbReference>
<dbReference type="InterPro" id="IPR036390">
    <property type="entry name" value="WH_DNA-bd_sf"/>
</dbReference>
<dbReference type="PANTHER" id="PTHR11849">
    <property type="entry name" value="ETS"/>
    <property type="match status" value="1"/>
</dbReference>
<dbReference type="PANTHER" id="PTHR11849:SF160">
    <property type="entry name" value="ETS TRANSLOCATION VARIANT 5"/>
    <property type="match status" value="1"/>
</dbReference>
<dbReference type="Pfam" id="PF00178">
    <property type="entry name" value="Ets"/>
    <property type="match status" value="1"/>
</dbReference>
<dbReference type="Pfam" id="PF04621">
    <property type="entry name" value="ETS_PEA3_N"/>
    <property type="match status" value="1"/>
</dbReference>
<dbReference type="PRINTS" id="PR00454">
    <property type="entry name" value="ETSDOMAIN"/>
</dbReference>
<dbReference type="SMART" id="SM00413">
    <property type="entry name" value="ETS"/>
    <property type="match status" value="1"/>
</dbReference>
<dbReference type="SUPFAM" id="SSF46785">
    <property type="entry name" value="Winged helix' DNA-binding domain"/>
    <property type="match status" value="1"/>
</dbReference>
<dbReference type="PROSITE" id="PS00345">
    <property type="entry name" value="ETS_DOMAIN_1"/>
    <property type="match status" value="1"/>
</dbReference>
<dbReference type="PROSITE" id="PS00346">
    <property type="entry name" value="ETS_DOMAIN_2"/>
    <property type="match status" value="1"/>
</dbReference>
<dbReference type="PROSITE" id="PS50061">
    <property type="entry name" value="ETS_DOMAIN_3"/>
    <property type="match status" value="1"/>
</dbReference>
<name>ETV5_HUMAN</name>
<comment type="function">
    <text evidence="5">Binds to DNA sequences containing the consensus nucleotide core sequence 5'-GGAA.-3'.</text>
</comment>
<comment type="subunit">
    <text evidence="4">Interacts (via C-terminal) with ZMYM5 (via N-terminal 120 amino acid region).</text>
</comment>
<comment type="interaction">
    <interactant intactId="EBI-3905093">
        <id>P41161</id>
    </interactant>
    <interactant intactId="EBI-1176214">
        <id>Q8NHY2</id>
        <label>COP1</label>
    </interactant>
    <organismsDiffer>false</organismsDiffer>
    <experiments>4</experiments>
</comment>
<comment type="subcellular location">
    <subcellularLocation>
        <location>Nucleus</location>
    </subcellularLocation>
</comment>
<comment type="alternative products">
    <event type="alternative splicing"/>
    <isoform>
        <id>P41161-1</id>
        <name>1</name>
        <sequence type="displayed"/>
    </isoform>
    <isoform>
        <id>P41161-2</id>
        <name>2</name>
        <sequence type="described" ref="VSP_055489"/>
    </isoform>
</comment>
<comment type="tissue specificity">
    <text>Ubiquitous.</text>
</comment>
<comment type="mass spectrometry" mass="57837.98" method="MALDI" evidence="3"/>
<comment type="similarity">
    <text evidence="7">Belongs to the ETS family.</text>
</comment>
<protein>
    <recommendedName>
        <fullName>ETS translocation variant 5</fullName>
    </recommendedName>
    <alternativeName>
        <fullName>Ets-related protein ERM</fullName>
    </alternativeName>
</protein>
<proteinExistence type="evidence at protein level"/>
<keyword id="KW-0002">3D-structure</keyword>
<keyword id="KW-0025">Alternative splicing</keyword>
<keyword id="KW-0238">DNA-binding</keyword>
<keyword id="KW-1017">Isopeptide bond</keyword>
<keyword id="KW-0539">Nucleus</keyword>
<keyword id="KW-0597">Phosphoprotein</keyword>
<keyword id="KW-1267">Proteomics identification</keyword>
<keyword id="KW-1185">Reference proteome</keyword>
<keyword id="KW-0832">Ubl conjugation</keyword>
<gene>
    <name type="primary">ETV5</name>
    <name type="synonym">ERM</name>
</gene>
<evidence type="ECO:0000255" key="1">
    <source>
        <dbReference type="PROSITE-ProRule" id="PRU00237"/>
    </source>
</evidence>
<evidence type="ECO:0000256" key="2">
    <source>
        <dbReference type="SAM" id="MobiDB-lite"/>
    </source>
</evidence>
<evidence type="ECO:0000269" key="3">
    <source>
    </source>
</evidence>
<evidence type="ECO:0000269" key="4">
    <source>
    </source>
</evidence>
<evidence type="ECO:0000269" key="5">
    <source>
    </source>
</evidence>
<evidence type="ECO:0000303" key="6">
    <source>
    </source>
</evidence>
<evidence type="ECO:0000305" key="7"/>
<evidence type="ECO:0007744" key="8">
    <source>
    </source>
</evidence>
<evidence type="ECO:0007744" key="9">
    <source>
    </source>
</evidence>
<evidence type="ECO:0007744" key="10">
    <source>
    </source>
</evidence>
<evidence type="ECO:0007829" key="11">
    <source>
        <dbReference type="PDB" id="5ILV"/>
    </source>
</evidence>
<accession>P41161</accession>
<accession>A6NH46</accession>
<accession>B7Z7D7</accession>
<accession>Q6IBN5</accession>